<dbReference type="EC" id="4.1.1.65" evidence="1"/>
<dbReference type="EMBL" id="FM209186">
    <property type="protein sequence ID" value="CAW30097.1"/>
    <property type="molecule type" value="Genomic_DNA"/>
</dbReference>
<dbReference type="SMR" id="B7V346"/>
<dbReference type="KEGG" id="pag:PLES_53431"/>
<dbReference type="HOGENOM" id="CLU_029061_4_1_6"/>
<dbReference type="UniPathway" id="UPA00558">
    <property type="reaction ID" value="UER00616"/>
</dbReference>
<dbReference type="GO" id="GO:0005886">
    <property type="term" value="C:plasma membrane"/>
    <property type="evidence" value="ECO:0007669"/>
    <property type="project" value="UniProtKB-SubCell"/>
</dbReference>
<dbReference type="GO" id="GO:0004609">
    <property type="term" value="F:phosphatidylserine decarboxylase activity"/>
    <property type="evidence" value="ECO:0007669"/>
    <property type="project" value="UniProtKB-UniRule"/>
</dbReference>
<dbReference type="GO" id="GO:0006646">
    <property type="term" value="P:phosphatidylethanolamine biosynthetic process"/>
    <property type="evidence" value="ECO:0007669"/>
    <property type="project" value="UniProtKB-UniRule"/>
</dbReference>
<dbReference type="HAMAP" id="MF_00662">
    <property type="entry name" value="PS_decarb_PSD_B_type1"/>
    <property type="match status" value="1"/>
</dbReference>
<dbReference type="InterPro" id="IPR003817">
    <property type="entry name" value="PS_Dcarbxylase"/>
</dbReference>
<dbReference type="InterPro" id="IPR033177">
    <property type="entry name" value="PSD-B"/>
</dbReference>
<dbReference type="InterPro" id="IPR033178">
    <property type="entry name" value="PSD_type1_pro"/>
</dbReference>
<dbReference type="NCBIfam" id="TIGR00163">
    <property type="entry name" value="PS_decarb"/>
    <property type="match status" value="1"/>
</dbReference>
<dbReference type="PANTHER" id="PTHR10067">
    <property type="entry name" value="PHOSPHATIDYLSERINE DECARBOXYLASE"/>
    <property type="match status" value="1"/>
</dbReference>
<dbReference type="PANTHER" id="PTHR10067:SF6">
    <property type="entry name" value="PHOSPHATIDYLSERINE DECARBOXYLASE PROENZYME, MITOCHONDRIAL"/>
    <property type="match status" value="1"/>
</dbReference>
<dbReference type="Pfam" id="PF02666">
    <property type="entry name" value="PS_Dcarbxylase"/>
    <property type="match status" value="1"/>
</dbReference>
<organism>
    <name type="scientific">Pseudomonas aeruginosa (strain LESB58)</name>
    <dbReference type="NCBI Taxonomy" id="557722"/>
    <lineage>
        <taxon>Bacteria</taxon>
        <taxon>Pseudomonadati</taxon>
        <taxon>Pseudomonadota</taxon>
        <taxon>Gammaproteobacteria</taxon>
        <taxon>Pseudomonadales</taxon>
        <taxon>Pseudomonadaceae</taxon>
        <taxon>Pseudomonas</taxon>
    </lineage>
</organism>
<protein>
    <recommendedName>
        <fullName evidence="1">Phosphatidylserine decarboxylase proenzyme</fullName>
        <ecNumber evidence="1">4.1.1.65</ecNumber>
    </recommendedName>
    <component>
        <recommendedName>
            <fullName evidence="1">Phosphatidylserine decarboxylase alpha chain</fullName>
        </recommendedName>
    </component>
    <component>
        <recommendedName>
            <fullName evidence="1">Phosphatidylserine decarboxylase beta chain</fullName>
        </recommendedName>
    </component>
</protein>
<evidence type="ECO:0000255" key="1">
    <source>
        <dbReference type="HAMAP-Rule" id="MF_00662"/>
    </source>
</evidence>
<keyword id="KW-1003">Cell membrane</keyword>
<keyword id="KW-0210">Decarboxylase</keyword>
<keyword id="KW-0444">Lipid biosynthesis</keyword>
<keyword id="KW-0443">Lipid metabolism</keyword>
<keyword id="KW-0456">Lyase</keyword>
<keyword id="KW-0472">Membrane</keyword>
<keyword id="KW-0594">Phospholipid biosynthesis</keyword>
<keyword id="KW-1208">Phospholipid metabolism</keyword>
<keyword id="KW-0670">Pyruvate</keyword>
<keyword id="KW-0865">Zymogen</keyword>
<proteinExistence type="inferred from homology"/>
<reference key="1">
    <citation type="journal article" date="2009" name="Genome Res.">
        <title>Newly introduced genomic prophage islands are critical determinants of in vivo competitiveness in the Liverpool epidemic strain of Pseudomonas aeruginosa.</title>
        <authorList>
            <person name="Winstanley C."/>
            <person name="Langille M.G.I."/>
            <person name="Fothergill J.L."/>
            <person name="Kukavica-Ibrulj I."/>
            <person name="Paradis-Bleau C."/>
            <person name="Sanschagrin F."/>
            <person name="Thomson N.R."/>
            <person name="Winsor G.L."/>
            <person name="Quail M.A."/>
            <person name="Lennard N."/>
            <person name="Bignell A."/>
            <person name="Clarke L."/>
            <person name="Seeger K."/>
            <person name="Saunders D."/>
            <person name="Harris D."/>
            <person name="Parkhill J."/>
            <person name="Hancock R.E.W."/>
            <person name="Brinkman F.S.L."/>
            <person name="Levesque R.C."/>
        </authorList>
    </citation>
    <scope>NUCLEOTIDE SEQUENCE [LARGE SCALE GENOMIC DNA]</scope>
    <source>
        <strain>LESB58</strain>
    </source>
</reference>
<feature type="chain" id="PRO_1000131386" description="Phosphatidylserine decarboxylase beta chain" evidence="1">
    <location>
        <begin position="1"/>
        <end position="253"/>
    </location>
</feature>
<feature type="chain" id="PRO_1000131387" description="Phosphatidylserine decarboxylase alpha chain" evidence="1">
    <location>
        <begin position="254"/>
        <end position="289"/>
    </location>
</feature>
<feature type="active site" description="Charge relay system; for autoendoproteolytic cleavage activity" evidence="1">
    <location>
        <position position="92"/>
    </location>
</feature>
<feature type="active site" description="Charge relay system; for autoendoproteolytic cleavage activity" evidence="1">
    <location>
        <position position="149"/>
    </location>
</feature>
<feature type="active site" description="Charge relay system; for autoendoproteolytic cleavage activity" evidence="1">
    <location>
        <position position="254"/>
    </location>
</feature>
<feature type="active site" description="Schiff-base intermediate with substrate; via pyruvic acid; for decarboxylase activity" evidence="1">
    <location>
        <position position="254"/>
    </location>
</feature>
<feature type="site" description="Cleavage (non-hydrolytic); by autocatalysis" evidence="1">
    <location>
        <begin position="253"/>
        <end position="254"/>
    </location>
</feature>
<feature type="modified residue" description="Pyruvic acid (Ser); by autocatalysis" evidence="1">
    <location>
        <position position="254"/>
    </location>
</feature>
<accession>B7V346</accession>
<sequence length="289" mass="32017">MSFKDRLFICSQYLLPHHLLSRLIGFAADCRATWFKDRLIAWFARRYQVDMREAQVEDLQAYEHFNAFFTRALKDGARPLAQEPGAVLCPADGAISQLGPIEHGRIFQAKGHSYSLAELLGGDAELAAPFMGGDFATVYLSPRDYHRVHMPLAGTLREMVYVPGRLFSVNQTTAENVPELFARNERVVCLFDTERGPMAVVLVGAMIVASIETVWAGLVTPPKRELKTFRYDEAARAPIRLEKGAELGRFKLGSTAIVLFGPQQVAFNDGLGAASPVRMGECLALPKQS</sequence>
<gene>
    <name evidence="1" type="primary">psd</name>
    <name type="ordered locus">PLES_53431</name>
</gene>
<comment type="function">
    <text evidence="1">Catalyzes the formation of phosphatidylethanolamine (PtdEtn) from phosphatidylserine (PtdSer).</text>
</comment>
<comment type="catalytic activity">
    <reaction evidence="1">
        <text>a 1,2-diacyl-sn-glycero-3-phospho-L-serine + H(+) = a 1,2-diacyl-sn-glycero-3-phosphoethanolamine + CO2</text>
        <dbReference type="Rhea" id="RHEA:20828"/>
        <dbReference type="ChEBI" id="CHEBI:15378"/>
        <dbReference type="ChEBI" id="CHEBI:16526"/>
        <dbReference type="ChEBI" id="CHEBI:57262"/>
        <dbReference type="ChEBI" id="CHEBI:64612"/>
        <dbReference type="EC" id="4.1.1.65"/>
    </reaction>
</comment>
<comment type="cofactor">
    <cofactor evidence="1">
        <name>pyruvate</name>
        <dbReference type="ChEBI" id="CHEBI:15361"/>
    </cofactor>
    <text evidence="1">Binds 1 pyruvoyl group covalently per subunit.</text>
</comment>
<comment type="pathway">
    <text evidence="1">Phospholipid metabolism; phosphatidylethanolamine biosynthesis; phosphatidylethanolamine from CDP-diacylglycerol: step 2/2.</text>
</comment>
<comment type="subunit">
    <text evidence="1">Heterodimer of a large membrane-associated beta subunit and a small pyruvoyl-containing alpha subunit.</text>
</comment>
<comment type="subcellular location">
    <subcellularLocation>
        <location evidence="1">Cell membrane</location>
        <topology evidence="1">Peripheral membrane protein</topology>
    </subcellularLocation>
</comment>
<comment type="PTM">
    <text evidence="1">Is synthesized initially as an inactive proenzyme. Formation of the active enzyme involves a self-maturation process in which the active site pyruvoyl group is generated from an internal serine residue via an autocatalytic post-translational modification. Two non-identical subunits are generated from the proenzyme in this reaction, and the pyruvate is formed at the N-terminus of the alpha chain, which is derived from the carboxyl end of the proenzyme. The autoendoproteolytic cleavage occurs by a canonical serine protease mechanism, in which the side chain hydroxyl group of the serine supplies its oxygen atom to form the C-terminus of the beta chain, while the remainder of the serine residue undergoes an oxidative deamination to produce ammonia and the pyruvoyl prosthetic group on the alpha chain. During this reaction, the Ser that is part of the protease active site of the proenzyme becomes the pyruvoyl prosthetic group, which constitutes an essential element of the active site of the mature decarboxylase.</text>
</comment>
<comment type="similarity">
    <text evidence="1">Belongs to the phosphatidylserine decarboxylase family. PSD-B subfamily. Prokaryotic type I sub-subfamily.</text>
</comment>
<name>PSD_PSEA8</name>